<organism>
    <name type="scientific">Scyliorhinus canicula</name>
    <name type="common">Small-spotted catshark</name>
    <name type="synonym">Squalus canicula</name>
    <dbReference type="NCBI Taxonomy" id="7830"/>
    <lineage>
        <taxon>Eukaryota</taxon>
        <taxon>Metazoa</taxon>
        <taxon>Chordata</taxon>
        <taxon>Craniata</taxon>
        <taxon>Vertebrata</taxon>
        <taxon>Chondrichthyes</taxon>
        <taxon>Elasmobranchii</taxon>
        <taxon>Galeomorphii</taxon>
        <taxon>Galeoidea</taxon>
        <taxon>Carcharhiniformes</taxon>
        <taxon>Scyliorhinidae</taxon>
        <taxon>Scyliorhinus</taxon>
    </lineage>
</organism>
<comment type="function">
    <text>Tachykinins are active peptides which excite neurons, evoke behavioral responses, are potent vasodilators and secretagogues, and contract (directly or indirectly) many smooth muscles.</text>
</comment>
<comment type="subcellular location">
    <subcellularLocation>
        <location>Secreted</location>
    </subcellularLocation>
</comment>
<comment type="similarity">
    <text evidence="2">Belongs to the tachykinin family.</text>
</comment>
<dbReference type="PIR" id="B24867">
    <property type="entry name" value="B24867"/>
</dbReference>
<dbReference type="GO" id="GO:0005576">
    <property type="term" value="C:extracellular region"/>
    <property type="evidence" value="ECO:0007669"/>
    <property type="project" value="UniProtKB-SubCell"/>
</dbReference>
<dbReference type="GO" id="GO:0007218">
    <property type="term" value="P:neuropeptide signaling pathway"/>
    <property type="evidence" value="ECO:0007669"/>
    <property type="project" value="UniProtKB-KW"/>
</dbReference>
<dbReference type="InterPro" id="IPR013055">
    <property type="entry name" value="Tachy_Neuro_lke_CS"/>
</dbReference>
<dbReference type="PROSITE" id="PS00267">
    <property type="entry name" value="TACHYKININ"/>
    <property type="match status" value="1"/>
</dbReference>
<feature type="peptide" id="PRO_0000044411" description="Scyliorhinin-2">
    <location>
        <begin position="1"/>
        <end position="18"/>
    </location>
</feature>
<feature type="modified residue" description="Methionine amide" evidence="1">
    <location>
        <position position="18"/>
    </location>
</feature>
<feature type="disulfide bond">
    <location>
        <begin position="7"/>
        <end position="13"/>
    </location>
</feature>
<sequence>SPSNSKCPDGPDCFVGLM</sequence>
<evidence type="ECO:0000269" key="1">
    <source>
    </source>
</evidence>
<evidence type="ECO:0000305" key="2"/>
<proteinExistence type="evidence at protein level"/>
<accession>P08609</accession>
<keyword id="KW-0027">Amidation</keyword>
<keyword id="KW-0903">Direct protein sequencing</keyword>
<keyword id="KW-1015">Disulfide bond</keyword>
<keyword id="KW-0527">Neuropeptide</keyword>
<keyword id="KW-0964">Secreted</keyword>
<protein>
    <recommendedName>
        <fullName>Scyliorhinin-2</fullName>
    </recommendedName>
    <alternativeName>
        <fullName>Rectin</fullName>
    </alternativeName>
    <alternativeName>
        <fullName>Scyliorhinin II</fullName>
    </alternativeName>
</protein>
<name>TKN2_SCYCA</name>
<reference key="1">
    <citation type="journal article" date="1986" name="FEBS Lett.">
        <title>Scyliorhinin I and II: two novel tachykinins from dogfish gut.</title>
        <authorList>
            <person name="Conlon J.M."/>
            <person name="Deacon C.F."/>
            <person name="O'Toole L."/>
            <person name="Thim L."/>
        </authorList>
    </citation>
    <scope>PROTEIN SEQUENCE</scope>
    <scope>AMIDATION AT MET-18</scope>
    <source>
        <tissue>Intestine</tissue>
    </source>
</reference>
<reference key="2">
    <citation type="journal article" date="1995" name="Am. J. Physiol.">
        <title>Characterization of the endogenous intestinal peptide that stimulates the rectal gland of Scyliorhinus canicula.</title>
        <authorList>
            <person name="Anderson W.G."/>
            <person name="Conlon J.M."/>
            <person name="Hazon N."/>
        </authorList>
    </citation>
    <scope>PROTEIN SEQUENCE</scope>
    <source>
        <tissue>Small intestine</tissue>
    </source>
</reference>